<gene>
    <name evidence="1" type="primary">minC</name>
    <name type="ordered locus">VCM66_1883</name>
</gene>
<reference key="1">
    <citation type="journal article" date="2008" name="PLoS ONE">
        <title>A recalibrated molecular clock and independent origins for the cholera pandemic clones.</title>
        <authorList>
            <person name="Feng L."/>
            <person name="Reeves P.R."/>
            <person name="Lan R."/>
            <person name="Ren Y."/>
            <person name="Gao C."/>
            <person name="Zhou Z."/>
            <person name="Ren Y."/>
            <person name="Cheng J."/>
            <person name="Wang W."/>
            <person name="Wang J."/>
            <person name="Qian W."/>
            <person name="Li D."/>
            <person name="Wang L."/>
        </authorList>
    </citation>
    <scope>NUCLEOTIDE SEQUENCE [LARGE SCALE GENOMIC DNA]</scope>
    <source>
        <strain>M66-2</strain>
    </source>
</reference>
<proteinExistence type="inferred from homology"/>
<comment type="function">
    <text evidence="1">Cell division inhibitor that blocks the formation of polar Z ring septums. Rapidly oscillates between the poles of the cell to destabilize FtsZ filaments that have formed before they mature into polar Z rings. Prevents FtsZ polymerization.</text>
</comment>
<comment type="subunit">
    <text evidence="1">Interacts with MinD and FtsZ.</text>
</comment>
<comment type="similarity">
    <text evidence="1">Belongs to the MinC family.</text>
</comment>
<dbReference type="EMBL" id="CP001233">
    <property type="protein sequence ID" value="ACP06188.1"/>
    <property type="molecule type" value="Genomic_DNA"/>
</dbReference>
<dbReference type="RefSeq" id="WP_000042146.1">
    <property type="nucleotide sequence ID" value="NC_012578.1"/>
</dbReference>
<dbReference type="SMR" id="C3LNR2"/>
<dbReference type="KEGG" id="vcm:VCM66_1883"/>
<dbReference type="HOGENOM" id="CLU_067812_0_1_6"/>
<dbReference type="Proteomes" id="UP000001217">
    <property type="component" value="Chromosome I"/>
</dbReference>
<dbReference type="GO" id="GO:0000902">
    <property type="term" value="P:cell morphogenesis"/>
    <property type="evidence" value="ECO:0007669"/>
    <property type="project" value="InterPro"/>
</dbReference>
<dbReference type="GO" id="GO:0000917">
    <property type="term" value="P:division septum assembly"/>
    <property type="evidence" value="ECO:0007669"/>
    <property type="project" value="UniProtKB-KW"/>
</dbReference>
<dbReference type="GO" id="GO:0051302">
    <property type="term" value="P:regulation of cell division"/>
    <property type="evidence" value="ECO:0007669"/>
    <property type="project" value="InterPro"/>
</dbReference>
<dbReference type="GO" id="GO:1901891">
    <property type="term" value="P:regulation of cell septum assembly"/>
    <property type="evidence" value="ECO:0007669"/>
    <property type="project" value="InterPro"/>
</dbReference>
<dbReference type="Gene3D" id="2.160.20.70">
    <property type="match status" value="1"/>
</dbReference>
<dbReference type="Gene3D" id="3.30.70.260">
    <property type="match status" value="1"/>
</dbReference>
<dbReference type="HAMAP" id="MF_00267">
    <property type="entry name" value="MinC"/>
    <property type="match status" value="1"/>
</dbReference>
<dbReference type="InterPro" id="IPR016098">
    <property type="entry name" value="CAP/MinC_C"/>
</dbReference>
<dbReference type="InterPro" id="IPR013033">
    <property type="entry name" value="MinC"/>
</dbReference>
<dbReference type="InterPro" id="IPR036145">
    <property type="entry name" value="MinC_C_sf"/>
</dbReference>
<dbReference type="InterPro" id="IPR007874">
    <property type="entry name" value="MinC_N"/>
</dbReference>
<dbReference type="InterPro" id="IPR005526">
    <property type="entry name" value="Septum_form_inhib_MinC_C"/>
</dbReference>
<dbReference type="NCBIfam" id="TIGR01222">
    <property type="entry name" value="minC"/>
    <property type="match status" value="1"/>
</dbReference>
<dbReference type="PANTHER" id="PTHR34108">
    <property type="entry name" value="SEPTUM SITE-DETERMINING PROTEIN MINC"/>
    <property type="match status" value="1"/>
</dbReference>
<dbReference type="PANTHER" id="PTHR34108:SF1">
    <property type="entry name" value="SEPTUM SITE-DETERMINING PROTEIN MINC"/>
    <property type="match status" value="1"/>
</dbReference>
<dbReference type="Pfam" id="PF03775">
    <property type="entry name" value="MinC_C"/>
    <property type="match status" value="1"/>
</dbReference>
<dbReference type="Pfam" id="PF05209">
    <property type="entry name" value="MinC_N"/>
    <property type="match status" value="1"/>
</dbReference>
<dbReference type="SUPFAM" id="SSF63848">
    <property type="entry name" value="Cell-division inhibitor MinC, C-terminal domain"/>
    <property type="match status" value="1"/>
</dbReference>
<accession>C3LNR2</accession>
<sequence length="220" mass="23646">MSKNPDLKGSSFTLSVLHLSDNQIAHTVQFLQEKIAQAPAFFANAPVVINVAKVEGDIDYPALKQGISQAGLIPVGVTGCKDKRSQNLAVEAGFAVMTATNSPAQAPAQMAPTKVIRTPVRSGQQIYAKDGDLVILSHVSAGAEVIADGSIHIYGTLRGRAIAGASGQREARIICHDLQAELISIAGRYWLSDQIESQFWQQRVMLSMTDESLYLETLTI</sequence>
<name>MINC_VIBCM</name>
<keyword id="KW-0131">Cell cycle</keyword>
<keyword id="KW-0132">Cell division</keyword>
<keyword id="KW-0717">Septation</keyword>
<feature type="chain" id="PRO_1000191261" description="Probable septum site-determining protein MinC">
    <location>
        <begin position="1"/>
        <end position="220"/>
    </location>
</feature>
<organism>
    <name type="scientific">Vibrio cholerae serotype O1 (strain M66-2)</name>
    <dbReference type="NCBI Taxonomy" id="579112"/>
    <lineage>
        <taxon>Bacteria</taxon>
        <taxon>Pseudomonadati</taxon>
        <taxon>Pseudomonadota</taxon>
        <taxon>Gammaproteobacteria</taxon>
        <taxon>Vibrionales</taxon>
        <taxon>Vibrionaceae</taxon>
        <taxon>Vibrio</taxon>
    </lineage>
</organism>
<evidence type="ECO:0000255" key="1">
    <source>
        <dbReference type="HAMAP-Rule" id="MF_00267"/>
    </source>
</evidence>
<protein>
    <recommendedName>
        <fullName evidence="1">Probable septum site-determining protein MinC</fullName>
    </recommendedName>
</protein>